<reference key="1">
    <citation type="journal article" date="2006" name="J. Bacteriol.">
        <title>Pathogenomic sequence analysis of Bacillus cereus and Bacillus thuringiensis isolates closely related to Bacillus anthracis.</title>
        <authorList>
            <person name="Han C.S."/>
            <person name="Xie G."/>
            <person name="Challacombe J.F."/>
            <person name="Altherr M.R."/>
            <person name="Bhotika S.S."/>
            <person name="Bruce D."/>
            <person name="Campbell C.S."/>
            <person name="Campbell M.L."/>
            <person name="Chen J."/>
            <person name="Chertkov O."/>
            <person name="Cleland C."/>
            <person name="Dimitrijevic M."/>
            <person name="Doggett N.A."/>
            <person name="Fawcett J.J."/>
            <person name="Glavina T."/>
            <person name="Goodwin L.A."/>
            <person name="Hill K.K."/>
            <person name="Hitchcock P."/>
            <person name="Jackson P.J."/>
            <person name="Keim P."/>
            <person name="Kewalramani A.R."/>
            <person name="Longmire J."/>
            <person name="Lucas S."/>
            <person name="Malfatti S."/>
            <person name="McMurry K."/>
            <person name="Meincke L.J."/>
            <person name="Misra M."/>
            <person name="Moseman B.L."/>
            <person name="Mundt M."/>
            <person name="Munk A.C."/>
            <person name="Okinaka R.T."/>
            <person name="Parson-Quintana B."/>
            <person name="Reilly L.P."/>
            <person name="Richardson P."/>
            <person name="Robinson D.L."/>
            <person name="Rubin E."/>
            <person name="Saunders E."/>
            <person name="Tapia R."/>
            <person name="Tesmer J.G."/>
            <person name="Thayer N."/>
            <person name="Thompson L.S."/>
            <person name="Tice H."/>
            <person name="Ticknor L.O."/>
            <person name="Wills P.L."/>
            <person name="Brettin T.S."/>
            <person name="Gilna P."/>
        </authorList>
    </citation>
    <scope>NUCLEOTIDE SEQUENCE [LARGE SCALE GENOMIC DNA]</scope>
    <source>
        <strain>ZK / E33L</strain>
    </source>
</reference>
<comment type="function">
    <text evidence="1">DNA-binding global transcriptional regulator which is involved in the adaptive response to starvation and acts by directly or indirectly controlling the expression of numerous genes in response to nutrient availability. During rapid exponential growth, CodY is highly active and represses genes whose products allow adaptation to nutrient depletion.</text>
</comment>
<comment type="subcellular location">
    <subcellularLocation>
        <location evidence="1">Cytoplasm</location>
    </subcellularLocation>
</comment>
<comment type="similarity">
    <text evidence="1">Belongs to the CodY family.</text>
</comment>
<feature type="chain" id="PRO_0000213216" description="Global transcriptional regulator CodY">
    <location>
        <begin position="1"/>
        <end position="259"/>
    </location>
</feature>
<feature type="DNA-binding region" description="H-T-H motif" evidence="1">
    <location>
        <begin position="203"/>
        <end position="222"/>
    </location>
</feature>
<feature type="region of interest" description="GAF domain" evidence="1">
    <location>
        <begin position="1"/>
        <end position="155"/>
    </location>
</feature>
<feature type="modified residue" description="Phosphoserine" evidence="1">
    <location>
        <position position="215"/>
    </location>
</feature>
<proteinExistence type="inferred from homology"/>
<sequence length="259" mass="28774">MELLAKTRKLNALLQSAAGKPVNFREMSDTMCEVIEANVFVVSRRGKLLGYAIHQQIENERMKQMLAERQFPEEYTQSLFNITETSSNLDVNSAYTAFPVENKELFGQGLTTIVPIVGGGERLGTLVLARLGQEFLDDDLILAEYSSTVVGMEILREKAEEIEEEARSKAVVQMAISSLSYSELEAIEHIFEELNGTEGLLVASKIADRVGITRSVIVNALRKLESAGVIESRSLGMKGTYIKVLNDKFLHELAKLKTN</sequence>
<organism>
    <name type="scientific">Bacillus cereus (strain ZK / E33L)</name>
    <dbReference type="NCBI Taxonomy" id="288681"/>
    <lineage>
        <taxon>Bacteria</taxon>
        <taxon>Bacillati</taxon>
        <taxon>Bacillota</taxon>
        <taxon>Bacilli</taxon>
        <taxon>Bacillales</taxon>
        <taxon>Bacillaceae</taxon>
        <taxon>Bacillus</taxon>
        <taxon>Bacillus cereus group</taxon>
    </lineage>
</organism>
<name>CODY_BACCZ</name>
<protein>
    <recommendedName>
        <fullName evidence="1">Global transcriptional regulator CodY</fullName>
    </recommendedName>
</protein>
<dbReference type="EMBL" id="CP000001">
    <property type="protein sequence ID" value="AAU16679.1"/>
    <property type="molecule type" value="Genomic_DNA"/>
</dbReference>
<dbReference type="RefSeq" id="WP_000421288.1">
    <property type="nucleotide sequence ID" value="NZ_CP009968.1"/>
</dbReference>
<dbReference type="SMR" id="Q636J8"/>
<dbReference type="GeneID" id="83637535"/>
<dbReference type="KEGG" id="bcz:BCE33L3587"/>
<dbReference type="PATRIC" id="fig|288681.22.peg.1824"/>
<dbReference type="Proteomes" id="UP000002612">
    <property type="component" value="Chromosome"/>
</dbReference>
<dbReference type="GO" id="GO:0005737">
    <property type="term" value="C:cytoplasm"/>
    <property type="evidence" value="ECO:0007669"/>
    <property type="project" value="UniProtKB-SubCell"/>
</dbReference>
<dbReference type="GO" id="GO:0003677">
    <property type="term" value="F:DNA binding"/>
    <property type="evidence" value="ECO:0007669"/>
    <property type="project" value="UniProtKB-UniRule"/>
</dbReference>
<dbReference type="GO" id="GO:0003700">
    <property type="term" value="F:DNA-binding transcription factor activity"/>
    <property type="evidence" value="ECO:0007669"/>
    <property type="project" value="InterPro"/>
</dbReference>
<dbReference type="GO" id="GO:0005525">
    <property type="term" value="F:GTP binding"/>
    <property type="evidence" value="ECO:0007669"/>
    <property type="project" value="InterPro"/>
</dbReference>
<dbReference type="GO" id="GO:0045892">
    <property type="term" value="P:negative regulation of DNA-templated transcription"/>
    <property type="evidence" value="ECO:0007669"/>
    <property type="project" value="UniProtKB-UniRule"/>
</dbReference>
<dbReference type="FunFam" id="1.10.10.10:FF:000034">
    <property type="entry name" value="GTP-sensing transcriptional pleiotropic repressor CodY"/>
    <property type="match status" value="1"/>
</dbReference>
<dbReference type="FunFam" id="3.30.450.40:FF:000003">
    <property type="entry name" value="GTP-sensing transcriptional pleiotropic repressor CodY"/>
    <property type="match status" value="1"/>
</dbReference>
<dbReference type="Gene3D" id="3.30.450.40">
    <property type="match status" value="1"/>
</dbReference>
<dbReference type="Gene3D" id="1.10.10.10">
    <property type="entry name" value="Winged helix-like DNA-binding domain superfamily/Winged helix DNA-binding domain"/>
    <property type="match status" value="1"/>
</dbReference>
<dbReference type="HAMAP" id="MF_00621">
    <property type="entry name" value="HTH_type_CodY"/>
    <property type="match status" value="1"/>
</dbReference>
<dbReference type="InterPro" id="IPR014154">
    <property type="entry name" value="CodY"/>
</dbReference>
<dbReference type="InterPro" id="IPR029016">
    <property type="entry name" value="GAF-like_dom_sf"/>
</dbReference>
<dbReference type="InterPro" id="IPR013198">
    <property type="entry name" value="GTP_trans_reg_CodY_C"/>
</dbReference>
<dbReference type="InterPro" id="IPR010312">
    <property type="entry name" value="Transc_reg_CodY_N"/>
</dbReference>
<dbReference type="InterPro" id="IPR036388">
    <property type="entry name" value="WH-like_DNA-bd_sf"/>
</dbReference>
<dbReference type="InterPro" id="IPR036390">
    <property type="entry name" value="WH_DNA-bd_sf"/>
</dbReference>
<dbReference type="NCBIfam" id="TIGR02787">
    <property type="entry name" value="codY_Gpos"/>
    <property type="match status" value="1"/>
</dbReference>
<dbReference type="NCBIfam" id="NF003170">
    <property type="entry name" value="PRK04158.1"/>
    <property type="match status" value="1"/>
</dbReference>
<dbReference type="PANTHER" id="PTHR40062:SF1">
    <property type="entry name" value="GLOBAL TRANSCRIPTIONAL REGULATOR CODY"/>
    <property type="match status" value="1"/>
</dbReference>
<dbReference type="PANTHER" id="PTHR40062">
    <property type="entry name" value="GTP-SENSING TRANSCRIPTIONAL PLEIOTROPIC REPRESSOR CODY"/>
    <property type="match status" value="1"/>
</dbReference>
<dbReference type="Pfam" id="PF06018">
    <property type="entry name" value="CodY"/>
    <property type="match status" value="1"/>
</dbReference>
<dbReference type="Pfam" id="PF08222">
    <property type="entry name" value="HTH_CodY"/>
    <property type="match status" value="1"/>
</dbReference>
<dbReference type="PIRSF" id="PIRSF011572">
    <property type="entry name" value="GTP_sensing_CodY"/>
    <property type="match status" value="1"/>
</dbReference>
<dbReference type="SUPFAM" id="SSF46785">
    <property type="entry name" value="Winged helix' DNA-binding domain"/>
    <property type="match status" value="1"/>
</dbReference>
<gene>
    <name evidence="1" type="primary">codY</name>
    <name type="ordered locus">BCE33L3587</name>
</gene>
<evidence type="ECO:0000255" key="1">
    <source>
        <dbReference type="HAMAP-Rule" id="MF_00621"/>
    </source>
</evidence>
<accession>Q636J8</accession>
<keyword id="KW-0963">Cytoplasm</keyword>
<keyword id="KW-0238">DNA-binding</keyword>
<keyword id="KW-0597">Phosphoprotein</keyword>
<keyword id="KW-0678">Repressor</keyword>
<keyword id="KW-0804">Transcription</keyword>
<keyword id="KW-0805">Transcription regulation</keyword>